<evidence type="ECO:0000250" key="1"/>
<evidence type="ECO:0000255" key="2"/>
<evidence type="ECO:0000269" key="3">
    <source>
    </source>
</evidence>
<evidence type="ECO:0000269" key="4">
    <source>
    </source>
</evidence>
<evidence type="ECO:0000269" key="5">
    <source>
    </source>
</evidence>
<evidence type="ECO:0000269" key="6">
    <source>
    </source>
</evidence>
<evidence type="ECO:0000305" key="7"/>
<keyword id="KW-1003">Cell membrane</keyword>
<keyword id="KW-0967">Endosome</keyword>
<keyword id="KW-0342">GTP-binding</keyword>
<keyword id="KW-0449">Lipoprotein</keyword>
<keyword id="KW-0472">Membrane</keyword>
<keyword id="KW-0488">Methylation</keyword>
<keyword id="KW-0547">Nucleotide-binding</keyword>
<keyword id="KW-0636">Prenylation</keyword>
<keyword id="KW-1185">Reference proteome</keyword>
<sequence>MNASQVAGEEAPQSGHSVKVVLVGDGGCGKTSLMMVFAKGAFPESYSPTVFERYNATLQMKGKPVHLQIWDTAGQDDYDRLRPLFYPDANVLLLCFDVTNPNSFDNVSNRWYPEVTHFCKGVPIIVVGCKIDLRKDKVLVNNLRKKRLEPVTYHRGHDMARSVGAVAYLECSARLHDNVEAVFQEAAEVALSSRRHNFWRRITQNCCLAT</sequence>
<dbReference type="EMBL" id="X84325">
    <property type="protein sequence ID" value="CAA59064.1"/>
    <property type="molecule type" value="mRNA"/>
</dbReference>
<dbReference type="EMBL" id="D89821">
    <property type="protein sequence ID" value="BAA14023.1"/>
    <property type="molecule type" value="mRNA"/>
</dbReference>
<dbReference type="EMBL" id="BC047989">
    <property type="protein sequence ID" value="AAH47989.1"/>
    <property type="molecule type" value="mRNA"/>
</dbReference>
<dbReference type="CCDS" id="CCDS29427.1"/>
<dbReference type="RefSeq" id="NP_031511.1">
    <property type="nucleotide sequence ID" value="NM_007485.5"/>
</dbReference>
<dbReference type="SMR" id="P97348"/>
<dbReference type="BioGRID" id="198198">
    <property type="interactions" value="7"/>
</dbReference>
<dbReference type="FunCoup" id="P97348">
    <property type="interactions" value="370"/>
</dbReference>
<dbReference type="IntAct" id="P97348">
    <property type="interactions" value="1"/>
</dbReference>
<dbReference type="MINT" id="P97348"/>
<dbReference type="STRING" id="10090.ENSMUSP00000036031"/>
<dbReference type="iPTMnet" id="P97348"/>
<dbReference type="PhosphoSitePlus" id="P97348"/>
<dbReference type="SwissPalm" id="P97348"/>
<dbReference type="jPOST" id="P97348"/>
<dbReference type="PaxDb" id="10090-ENSMUSP00000036031"/>
<dbReference type="ProteomicsDB" id="254878"/>
<dbReference type="Pumba" id="P97348"/>
<dbReference type="Antibodypedia" id="16425">
    <property type="antibodies" value="227 antibodies from 28 providers"/>
</dbReference>
<dbReference type="DNASU" id="11854"/>
<dbReference type="Ensembl" id="ENSMUST00000048197.10">
    <property type="protein sequence ID" value="ENSMUSP00000036031.4"/>
    <property type="gene ID" value="ENSMUSG00000041845.12"/>
</dbReference>
<dbReference type="GeneID" id="11854"/>
<dbReference type="KEGG" id="mmu:11854"/>
<dbReference type="UCSC" id="uc008gaa.1">
    <property type="organism name" value="mouse"/>
</dbReference>
<dbReference type="AGR" id="MGI:108446"/>
<dbReference type="CTD" id="29984"/>
<dbReference type="MGI" id="MGI:108446">
    <property type="gene designation" value="Rhod"/>
</dbReference>
<dbReference type="VEuPathDB" id="HostDB:ENSMUSG00000041845"/>
<dbReference type="eggNOG" id="KOG0393">
    <property type="taxonomic scope" value="Eukaryota"/>
</dbReference>
<dbReference type="GeneTree" id="ENSGT00940000161731"/>
<dbReference type="HOGENOM" id="CLU_041217_21_2_1"/>
<dbReference type="InParanoid" id="P97348"/>
<dbReference type="OMA" id="CYPTADV"/>
<dbReference type="OrthoDB" id="53770at9989"/>
<dbReference type="PhylomeDB" id="P97348"/>
<dbReference type="TreeFam" id="TF331746"/>
<dbReference type="Reactome" id="R-MMU-5663220">
    <property type="pathway name" value="RHO GTPases Activate Formins"/>
</dbReference>
<dbReference type="Reactome" id="R-MMU-9013405">
    <property type="pathway name" value="RHOD GTPase cycle"/>
</dbReference>
<dbReference type="BioGRID-ORCS" id="11854">
    <property type="hits" value="4 hits in 76 CRISPR screens"/>
</dbReference>
<dbReference type="ChiTaRS" id="Rhod">
    <property type="organism name" value="mouse"/>
</dbReference>
<dbReference type="PRO" id="PR:P97348"/>
<dbReference type="Proteomes" id="UP000000589">
    <property type="component" value="Chromosome 19"/>
</dbReference>
<dbReference type="RNAct" id="P97348">
    <property type="molecule type" value="protein"/>
</dbReference>
<dbReference type="Bgee" id="ENSMUSG00000041845">
    <property type="expression patterns" value="Expressed in saccule of membranous labyrinth and 130 other cell types or tissues"/>
</dbReference>
<dbReference type="ExpressionAtlas" id="P97348">
    <property type="expression patterns" value="baseline and differential"/>
</dbReference>
<dbReference type="GO" id="GO:0042995">
    <property type="term" value="C:cell projection"/>
    <property type="evidence" value="ECO:0000314"/>
    <property type="project" value="MGI"/>
</dbReference>
<dbReference type="GO" id="GO:0005769">
    <property type="term" value="C:early endosome"/>
    <property type="evidence" value="ECO:0007669"/>
    <property type="project" value="UniProtKB-SubCell"/>
</dbReference>
<dbReference type="GO" id="GO:0005886">
    <property type="term" value="C:plasma membrane"/>
    <property type="evidence" value="ECO:0007669"/>
    <property type="project" value="UniProtKB-SubCell"/>
</dbReference>
<dbReference type="GO" id="GO:0005525">
    <property type="term" value="F:GTP binding"/>
    <property type="evidence" value="ECO:0000314"/>
    <property type="project" value="MGI"/>
</dbReference>
<dbReference type="GO" id="GO:0003924">
    <property type="term" value="F:GTPase activity"/>
    <property type="evidence" value="ECO:0007669"/>
    <property type="project" value="InterPro"/>
</dbReference>
<dbReference type="GO" id="GO:0019901">
    <property type="term" value="F:protein kinase binding"/>
    <property type="evidence" value="ECO:0000314"/>
    <property type="project" value="UniProtKB"/>
</dbReference>
<dbReference type="GO" id="GO:0051017">
    <property type="term" value="P:actin filament bundle assembly"/>
    <property type="evidence" value="ECO:0007669"/>
    <property type="project" value="Ensembl"/>
</dbReference>
<dbReference type="GO" id="GO:0030041">
    <property type="term" value="P:actin filament polymerization"/>
    <property type="evidence" value="ECO:0000314"/>
    <property type="project" value="MGI"/>
</dbReference>
<dbReference type="GO" id="GO:0030031">
    <property type="term" value="P:cell projection assembly"/>
    <property type="evidence" value="ECO:0000314"/>
    <property type="project" value="MGI"/>
</dbReference>
<dbReference type="GO" id="GO:0008543">
    <property type="term" value="P:fibroblast growth factor receptor signaling pathway"/>
    <property type="evidence" value="ECO:0000314"/>
    <property type="project" value="MGI"/>
</dbReference>
<dbReference type="GO" id="GO:0048041">
    <property type="term" value="P:focal adhesion assembly"/>
    <property type="evidence" value="ECO:0007669"/>
    <property type="project" value="Ensembl"/>
</dbReference>
<dbReference type="GO" id="GO:0030032">
    <property type="term" value="P:lamellipodium assembly"/>
    <property type="evidence" value="ECO:0007669"/>
    <property type="project" value="Ensembl"/>
</dbReference>
<dbReference type="GO" id="GO:0045785">
    <property type="term" value="P:positive regulation of cell adhesion"/>
    <property type="evidence" value="ECO:0007669"/>
    <property type="project" value="Ensembl"/>
</dbReference>
<dbReference type="GO" id="GO:0030335">
    <property type="term" value="P:positive regulation of cell migration"/>
    <property type="evidence" value="ECO:0007669"/>
    <property type="project" value="Ensembl"/>
</dbReference>
<dbReference type="GO" id="GO:0006605">
    <property type="term" value="P:protein targeting"/>
    <property type="evidence" value="ECO:0000315"/>
    <property type="project" value="MGI"/>
</dbReference>
<dbReference type="GO" id="GO:0032956">
    <property type="term" value="P:regulation of actin cytoskeleton organization"/>
    <property type="evidence" value="ECO:0000314"/>
    <property type="project" value="UniProtKB"/>
</dbReference>
<dbReference type="GO" id="GO:0051893">
    <property type="term" value="P:regulation of focal adhesion assembly"/>
    <property type="evidence" value="ECO:0000314"/>
    <property type="project" value="UniProtKB"/>
</dbReference>
<dbReference type="GO" id="GO:0071774">
    <property type="term" value="P:response to fibroblast growth factor"/>
    <property type="evidence" value="ECO:0000314"/>
    <property type="project" value="MGI"/>
</dbReference>
<dbReference type="GO" id="GO:0007264">
    <property type="term" value="P:small GTPase-mediated signal transduction"/>
    <property type="evidence" value="ECO:0007669"/>
    <property type="project" value="InterPro"/>
</dbReference>
<dbReference type="CDD" id="cd04132">
    <property type="entry name" value="Rho4_like"/>
    <property type="match status" value="1"/>
</dbReference>
<dbReference type="FunFam" id="3.40.50.300:FF:000676">
    <property type="entry name" value="Ras homolog family member F"/>
    <property type="match status" value="1"/>
</dbReference>
<dbReference type="Gene3D" id="3.40.50.300">
    <property type="entry name" value="P-loop containing nucleotide triphosphate hydrolases"/>
    <property type="match status" value="1"/>
</dbReference>
<dbReference type="InterPro" id="IPR027417">
    <property type="entry name" value="P-loop_NTPase"/>
</dbReference>
<dbReference type="InterPro" id="IPR005225">
    <property type="entry name" value="Small_GTP-bd"/>
</dbReference>
<dbReference type="InterPro" id="IPR001806">
    <property type="entry name" value="Small_GTPase"/>
</dbReference>
<dbReference type="InterPro" id="IPR003578">
    <property type="entry name" value="Small_GTPase_Rho"/>
</dbReference>
<dbReference type="NCBIfam" id="TIGR00231">
    <property type="entry name" value="small_GTP"/>
    <property type="match status" value="1"/>
</dbReference>
<dbReference type="PANTHER" id="PTHR24072">
    <property type="entry name" value="RHO FAMILY GTPASE"/>
    <property type="match status" value="1"/>
</dbReference>
<dbReference type="Pfam" id="PF00071">
    <property type="entry name" value="Ras"/>
    <property type="match status" value="1"/>
</dbReference>
<dbReference type="PRINTS" id="PR00449">
    <property type="entry name" value="RASTRNSFRMNG"/>
</dbReference>
<dbReference type="SMART" id="SM00175">
    <property type="entry name" value="RAB"/>
    <property type="match status" value="1"/>
</dbReference>
<dbReference type="SMART" id="SM00176">
    <property type="entry name" value="RAN"/>
    <property type="match status" value="1"/>
</dbReference>
<dbReference type="SMART" id="SM00173">
    <property type="entry name" value="RAS"/>
    <property type="match status" value="1"/>
</dbReference>
<dbReference type="SMART" id="SM00174">
    <property type="entry name" value="RHO"/>
    <property type="match status" value="1"/>
</dbReference>
<dbReference type="SUPFAM" id="SSF52540">
    <property type="entry name" value="P-loop containing nucleoside triphosphate hydrolases"/>
    <property type="match status" value="1"/>
</dbReference>
<dbReference type="PROSITE" id="PS51420">
    <property type="entry name" value="RHO"/>
    <property type="match status" value="1"/>
</dbReference>
<comment type="function">
    <text evidence="3 4 5 6">Involved in endosome dynamics. May coordinate membrane transport with the function of the cytoskeleton. Involved in the internalization and trafficking of activated tyrosine kinase receptors such as PDGFRB. Participates in the reorganization of actin cytoskeleton; the function seems to involve WHAMM and includes regulation of filopodia formation and actin filament bundling. Can modulate the effect of DAPK3 in reorganization of actin cytoskeleton and focal adhesion dissolution.</text>
</comment>
<comment type="subunit">
    <text evidence="3 4 5">Interacts with PAK5. Interacts (in GTP-bound form) with DAPK3, FILIP1 and WHAMM. Interacts (independent of GTP-loaded status) with ANKFY1.</text>
</comment>
<comment type="subcellular location">
    <subcellularLocation>
        <location>Cell membrane</location>
    </subcellularLocation>
    <subcellularLocation>
        <location evidence="5">Early endosome</location>
    </subcellularLocation>
    <text evidence="5">Colocalizes with RAB5 to early endosomes.</text>
</comment>
<comment type="tissue specificity">
    <text>Widely expressed.</text>
</comment>
<comment type="similarity">
    <text evidence="7">Belongs to the small GTPase superfamily. Rho family.</text>
</comment>
<feature type="chain" id="PRO_0000198864" description="Rho-related GTP-binding protein RhoD">
    <location>
        <begin position="1"/>
        <end position="207"/>
    </location>
</feature>
<feature type="propeptide" id="PRO_0000223366" description="Removed in mature form" evidence="1">
    <location>
        <begin position="208"/>
        <end position="210"/>
    </location>
</feature>
<feature type="short sequence motif" description="Effector region" evidence="2">
    <location>
        <begin position="46"/>
        <end position="54"/>
    </location>
</feature>
<feature type="binding site" evidence="1">
    <location>
        <begin position="24"/>
        <end position="31"/>
    </location>
    <ligand>
        <name>GTP</name>
        <dbReference type="ChEBI" id="CHEBI:37565"/>
    </ligand>
</feature>
<feature type="binding site" evidence="1">
    <location>
        <begin position="71"/>
        <end position="75"/>
    </location>
    <ligand>
        <name>GTP</name>
        <dbReference type="ChEBI" id="CHEBI:37565"/>
    </ligand>
</feature>
<feature type="binding site" evidence="1">
    <location>
        <begin position="129"/>
        <end position="132"/>
    </location>
    <ligand>
        <name>GTP</name>
        <dbReference type="ChEBI" id="CHEBI:37565"/>
    </ligand>
</feature>
<feature type="modified residue" description="Cysteine methyl ester" evidence="1">
    <location>
        <position position="207"/>
    </location>
</feature>
<feature type="lipid moiety-binding region" description="S-geranylgeranyl cysteine" evidence="1">
    <location>
        <position position="207"/>
    </location>
</feature>
<reference key="1">
    <citation type="journal article" date="1996" name="Nature">
        <title>Endosome dynamics regulated by a Rho protein.</title>
        <authorList>
            <person name="Murphy C."/>
            <person name="Saffrich R."/>
            <person name="Grummt M."/>
            <person name="Gournier H."/>
            <person name="Rybin V."/>
            <person name="Rubino M."/>
            <person name="Auvinen P."/>
            <person name="Luetcke A."/>
            <person name="Parton R.G."/>
            <person name="Zerial M."/>
        </authorList>
    </citation>
    <scope>NUCLEOTIDE SEQUENCE [MRNA]</scope>
    <scope>FUNCTION</scope>
    <source>
        <tissue>Kidney</tissue>
    </source>
</reference>
<reference key="2">
    <citation type="journal article" date="1997" name="Oncogene">
        <title>Novel small GTPase M-Ras participates in reorganization of actin cytoskeleton.</title>
        <authorList>
            <person name="Matsumoto K."/>
            <person name="Asano T."/>
            <person name="Endo T."/>
        </authorList>
    </citation>
    <scope>NUCLEOTIDE SEQUENCE [MRNA]</scope>
    <source>
        <tissue>Skeletal muscle</tissue>
    </source>
</reference>
<reference key="3">
    <citation type="journal article" date="2004" name="Genome Res.">
        <title>The status, quality, and expansion of the NIH full-length cDNA project: the Mammalian Gene Collection (MGC).</title>
        <authorList>
            <consortium name="The MGC Project Team"/>
        </authorList>
    </citation>
    <scope>NUCLEOTIDE SEQUENCE [LARGE SCALE MRNA]</scope>
    <source>
        <tissue>Embryo</tissue>
    </source>
</reference>
<reference key="4">
    <citation type="journal article" date="2010" name="Cell">
        <title>A tissue-specific atlas of mouse protein phosphorylation and expression.</title>
        <authorList>
            <person name="Huttlin E.L."/>
            <person name="Jedrychowski M.P."/>
            <person name="Elias J.E."/>
            <person name="Goswami T."/>
            <person name="Rad R."/>
            <person name="Beausoleil S.A."/>
            <person name="Villen J."/>
            <person name="Haas W."/>
            <person name="Sowa M.E."/>
            <person name="Gygi S.P."/>
        </authorList>
    </citation>
    <scope>IDENTIFICATION BY MASS SPECTROMETRY [LARGE SCALE ANALYSIS]</scope>
    <source>
        <tissue>Liver</tissue>
    </source>
</reference>
<reference key="5">
    <citation type="journal article" date="2012" name="Mol. Biol. Cell">
        <title>RhoD regulates cytoskeletal dynamics via the actin nucleation-promoting factor WASp homologue associated with actin Golgi membranes and microtubules.</title>
        <authorList>
            <person name="Gad A.K."/>
            <person name="Nehru V."/>
            <person name="Ruusala A."/>
            <person name="Aspenstrom P."/>
        </authorList>
    </citation>
    <scope>FUNCTION</scope>
    <scope>INTERACTION WITH FILIP1 AND WHAMM</scope>
</reference>
<reference key="6">
    <citation type="journal article" date="2013" name="Biochem. Biophys. Res. Commun.">
        <title>Interaction of RhoD and ZIP kinase modulates actin filament assembly and focal adhesion dynamics.</title>
        <authorList>
            <person name="Nehru V."/>
            <person name="Almeida F.N."/>
            <person name="Aspenstrom P."/>
        </authorList>
    </citation>
    <scope>FUNCTION</scope>
    <scope>INTERACTION WITH DAPK3</scope>
</reference>
<reference key="7">
    <citation type="journal article" date="2013" name="Traffic">
        <title>RhoD binds the Rab5 effector Rabankyrin-5 and has a role in trafficking of the platelet-derived growth factor receptor.</title>
        <authorList>
            <person name="Nehru V."/>
            <person name="Voytyuk O."/>
            <person name="Lennartsson J."/>
            <person name="Aspenstroem P."/>
        </authorList>
    </citation>
    <scope>FUNCTION</scope>
    <scope>INTERACTION WITH ANKFY1</scope>
    <scope>SUBCELLULAR LOCATION</scope>
</reference>
<organism>
    <name type="scientific">Mus musculus</name>
    <name type="common">Mouse</name>
    <dbReference type="NCBI Taxonomy" id="10090"/>
    <lineage>
        <taxon>Eukaryota</taxon>
        <taxon>Metazoa</taxon>
        <taxon>Chordata</taxon>
        <taxon>Craniata</taxon>
        <taxon>Vertebrata</taxon>
        <taxon>Euteleostomi</taxon>
        <taxon>Mammalia</taxon>
        <taxon>Eutheria</taxon>
        <taxon>Euarchontoglires</taxon>
        <taxon>Glires</taxon>
        <taxon>Rodentia</taxon>
        <taxon>Myomorpha</taxon>
        <taxon>Muroidea</taxon>
        <taxon>Muridae</taxon>
        <taxon>Murinae</taxon>
        <taxon>Mus</taxon>
        <taxon>Mus</taxon>
    </lineage>
</organism>
<proteinExistence type="evidence at protein level"/>
<protein>
    <recommendedName>
        <fullName>Rho-related GTP-binding protein RhoD</fullName>
    </recommendedName>
</protein>
<gene>
    <name type="primary">Rhod</name>
    <name type="synonym">Arhd</name>
    <name type="synonym">Rhom</name>
</gene>
<accession>P97348</accession>
<accession>O09104</accession>
<name>RHOD_MOUSE</name>